<feature type="chain" id="PRO_1000021299" description="Shikimate dehydrogenase (NADP(+))">
    <location>
        <begin position="1"/>
        <end position="279"/>
    </location>
</feature>
<feature type="active site" description="Proton acceptor" evidence="1">
    <location>
        <position position="68"/>
    </location>
</feature>
<feature type="binding site" evidence="1">
    <location>
        <begin position="18"/>
        <end position="20"/>
    </location>
    <ligand>
        <name>shikimate</name>
        <dbReference type="ChEBI" id="CHEBI:36208"/>
    </ligand>
</feature>
<feature type="binding site" evidence="1">
    <location>
        <position position="64"/>
    </location>
    <ligand>
        <name>shikimate</name>
        <dbReference type="ChEBI" id="CHEBI:36208"/>
    </ligand>
</feature>
<feature type="binding site" evidence="1">
    <location>
        <position position="80"/>
    </location>
    <ligand>
        <name>NADP(+)</name>
        <dbReference type="ChEBI" id="CHEBI:58349"/>
    </ligand>
</feature>
<feature type="binding site" evidence="1">
    <location>
        <position position="89"/>
    </location>
    <ligand>
        <name>shikimate</name>
        <dbReference type="ChEBI" id="CHEBI:36208"/>
    </ligand>
</feature>
<feature type="binding site" evidence="1">
    <location>
        <position position="104"/>
    </location>
    <ligand>
        <name>shikimate</name>
        <dbReference type="ChEBI" id="CHEBI:36208"/>
    </ligand>
</feature>
<feature type="binding site" evidence="1">
    <location>
        <begin position="129"/>
        <end position="133"/>
    </location>
    <ligand>
        <name>NADP(+)</name>
        <dbReference type="ChEBI" id="CHEBI:58349"/>
    </ligand>
</feature>
<feature type="binding site" evidence="1">
    <location>
        <begin position="153"/>
        <end position="158"/>
    </location>
    <ligand>
        <name>NADP(+)</name>
        <dbReference type="ChEBI" id="CHEBI:58349"/>
    </ligand>
</feature>
<feature type="binding site" evidence="1">
    <location>
        <position position="218"/>
    </location>
    <ligand>
        <name>NADP(+)</name>
        <dbReference type="ChEBI" id="CHEBI:58349"/>
    </ligand>
</feature>
<feature type="binding site" evidence="1">
    <location>
        <position position="220"/>
    </location>
    <ligand>
        <name>shikimate</name>
        <dbReference type="ChEBI" id="CHEBI:36208"/>
    </ligand>
</feature>
<feature type="binding site" evidence="1">
    <location>
        <position position="241"/>
    </location>
    <ligand>
        <name>NADP(+)</name>
        <dbReference type="ChEBI" id="CHEBI:58349"/>
    </ligand>
</feature>
<organism>
    <name type="scientific">Chelativorans sp. (strain BNC1)</name>
    <dbReference type="NCBI Taxonomy" id="266779"/>
    <lineage>
        <taxon>Bacteria</taxon>
        <taxon>Pseudomonadati</taxon>
        <taxon>Pseudomonadota</taxon>
        <taxon>Alphaproteobacteria</taxon>
        <taxon>Hyphomicrobiales</taxon>
        <taxon>Phyllobacteriaceae</taxon>
        <taxon>Chelativorans</taxon>
    </lineage>
</organism>
<sequence length="279" mass="30319">MAESLHRAFICGHPVAHSRSPVIHNFWLKQHGIEGSYERRDIAPEAFSLFIREFPRFYMGGNVTIPHKESAWRLVETRDEAAETIGAVNTLWLQDGRIMGGNTDTYGFAANLDMELAGWEKNAVATVLGAGGAALAVVHALQSRGIRDIRIVNRTVSRARAVVDRFKGGTSAHAWEAVPDLLSDTSLLVNTTSLGMHGGPEGHIDLAPLPDSAIVTDIVYVPLRTPLLASAAARGLRTVDGLGMLLHQAVPGFERWFGVRPEVTPHLREIVVADLEAGK</sequence>
<reference key="1">
    <citation type="submission" date="2006-06" db="EMBL/GenBank/DDBJ databases">
        <title>Complete sequence of chromosome of Mesorhizobium sp. BNC1.</title>
        <authorList>
            <consortium name="US DOE Joint Genome Institute"/>
            <person name="Copeland A."/>
            <person name="Lucas S."/>
            <person name="Lapidus A."/>
            <person name="Barry K."/>
            <person name="Detter J.C."/>
            <person name="Glavina del Rio T."/>
            <person name="Hammon N."/>
            <person name="Israni S."/>
            <person name="Dalin E."/>
            <person name="Tice H."/>
            <person name="Pitluck S."/>
            <person name="Chertkov O."/>
            <person name="Brettin T."/>
            <person name="Bruce D."/>
            <person name="Han C."/>
            <person name="Tapia R."/>
            <person name="Gilna P."/>
            <person name="Schmutz J."/>
            <person name="Larimer F."/>
            <person name="Land M."/>
            <person name="Hauser L."/>
            <person name="Kyrpides N."/>
            <person name="Mikhailova N."/>
            <person name="Richardson P."/>
        </authorList>
    </citation>
    <scope>NUCLEOTIDE SEQUENCE [LARGE SCALE GENOMIC DNA]</scope>
    <source>
        <strain>BNC1</strain>
    </source>
</reference>
<protein>
    <recommendedName>
        <fullName evidence="1">Shikimate dehydrogenase (NADP(+))</fullName>
        <shortName evidence="1">SDH</shortName>
        <ecNumber evidence="1">1.1.1.25</ecNumber>
    </recommendedName>
</protein>
<proteinExistence type="inferred from homology"/>
<evidence type="ECO:0000255" key="1">
    <source>
        <dbReference type="HAMAP-Rule" id="MF_00222"/>
    </source>
</evidence>
<dbReference type="EC" id="1.1.1.25" evidence="1"/>
<dbReference type="EMBL" id="CP000390">
    <property type="protein sequence ID" value="ABG64851.1"/>
    <property type="molecule type" value="Genomic_DNA"/>
</dbReference>
<dbReference type="SMR" id="Q11CM4"/>
<dbReference type="STRING" id="266779.Meso_3480"/>
<dbReference type="KEGG" id="mes:Meso_3480"/>
<dbReference type="eggNOG" id="COG0169">
    <property type="taxonomic scope" value="Bacteria"/>
</dbReference>
<dbReference type="HOGENOM" id="CLU_044063_2_0_5"/>
<dbReference type="OrthoDB" id="9792692at2"/>
<dbReference type="UniPathway" id="UPA00053">
    <property type="reaction ID" value="UER00087"/>
</dbReference>
<dbReference type="GO" id="GO:0005829">
    <property type="term" value="C:cytosol"/>
    <property type="evidence" value="ECO:0007669"/>
    <property type="project" value="TreeGrafter"/>
</dbReference>
<dbReference type="GO" id="GO:0050661">
    <property type="term" value="F:NADP binding"/>
    <property type="evidence" value="ECO:0007669"/>
    <property type="project" value="InterPro"/>
</dbReference>
<dbReference type="GO" id="GO:0004764">
    <property type="term" value="F:shikimate 3-dehydrogenase (NADP+) activity"/>
    <property type="evidence" value="ECO:0007669"/>
    <property type="project" value="UniProtKB-UniRule"/>
</dbReference>
<dbReference type="GO" id="GO:0008652">
    <property type="term" value="P:amino acid biosynthetic process"/>
    <property type="evidence" value="ECO:0007669"/>
    <property type="project" value="UniProtKB-KW"/>
</dbReference>
<dbReference type="GO" id="GO:0009073">
    <property type="term" value="P:aromatic amino acid family biosynthetic process"/>
    <property type="evidence" value="ECO:0007669"/>
    <property type="project" value="UniProtKB-KW"/>
</dbReference>
<dbReference type="GO" id="GO:0009423">
    <property type="term" value="P:chorismate biosynthetic process"/>
    <property type="evidence" value="ECO:0007669"/>
    <property type="project" value="UniProtKB-UniRule"/>
</dbReference>
<dbReference type="GO" id="GO:0019632">
    <property type="term" value="P:shikimate metabolic process"/>
    <property type="evidence" value="ECO:0007669"/>
    <property type="project" value="InterPro"/>
</dbReference>
<dbReference type="CDD" id="cd01065">
    <property type="entry name" value="NAD_bind_Shikimate_DH"/>
    <property type="match status" value="1"/>
</dbReference>
<dbReference type="Gene3D" id="3.40.50.10860">
    <property type="entry name" value="Leucine Dehydrogenase, chain A, domain 1"/>
    <property type="match status" value="1"/>
</dbReference>
<dbReference type="Gene3D" id="3.40.50.720">
    <property type="entry name" value="NAD(P)-binding Rossmann-like Domain"/>
    <property type="match status" value="1"/>
</dbReference>
<dbReference type="HAMAP" id="MF_00222">
    <property type="entry name" value="Shikimate_DH_AroE"/>
    <property type="match status" value="1"/>
</dbReference>
<dbReference type="InterPro" id="IPR046346">
    <property type="entry name" value="Aminoacid_DH-like_N_sf"/>
</dbReference>
<dbReference type="InterPro" id="IPR036291">
    <property type="entry name" value="NAD(P)-bd_dom_sf"/>
</dbReference>
<dbReference type="InterPro" id="IPR041121">
    <property type="entry name" value="SDH_C"/>
</dbReference>
<dbReference type="InterPro" id="IPR011342">
    <property type="entry name" value="Shikimate_DH"/>
</dbReference>
<dbReference type="InterPro" id="IPR013708">
    <property type="entry name" value="Shikimate_DH-bd_N"/>
</dbReference>
<dbReference type="InterPro" id="IPR022893">
    <property type="entry name" value="Shikimate_DH_fam"/>
</dbReference>
<dbReference type="InterPro" id="IPR006151">
    <property type="entry name" value="Shikm_DH/Glu-tRNA_Rdtase"/>
</dbReference>
<dbReference type="NCBIfam" id="TIGR00507">
    <property type="entry name" value="aroE"/>
    <property type="match status" value="1"/>
</dbReference>
<dbReference type="NCBIfam" id="NF001312">
    <property type="entry name" value="PRK00258.1-4"/>
    <property type="match status" value="1"/>
</dbReference>
<dbReference type="PANTHER" id="PTHR21089:SF1">
    <property type="entry name" value="BIFUNCTIONAL 3-DEHYDROQUINATE DEHYDRATASE_SHIKIMATE DEHYDROGENASE, CHLOROPLASTIC"/>
    <property type="match status" value="1"/>
</dbReference>
<dbReference type="PANTHER" id="PTHR21089">
    <property type="entry name" value="SHIKIMATE DEHYDROGENASE"/>
    <property type="match status" value="1"/>
</dbReference>
<dbReference type="Pfam" id="PF18317">
    <property type="entry name" value="SDH_C"/>
    <property type="match status" value="1"/>
</dbReference>
<dbReference type="Pfam" id="PF01488">
    <property type="entry name" value="Shikimate_DH"/>
    <property type="match status" value="1"/>
</dbReference>
<dbReference type="Pfam" id="PF08501">
    <property type="entry name" value="Shikimate_dh_N"/>
    <property type="match status" value="1"/>
</dbReference>
<dbReference type="SUPFAM" id="SSF53223">
    <property type="entry name" value="Aminoacid dehydrogenase-like, N-terminal domain"/>
    <property type="match status" value="1"/>
</dbReference>
<dbReference type="SUPFAM" id="SSF51735">
    <property type="entry name" value="NAD(P)-binding Rossmann-fold domains"/>
    <property type="match status" value="1"/>
</dbReference>
<accession>Q11CM4</accession>
<gene>
    <name evidence="1" type="primary">aroE</name>
    <name type="ordered locus">Meso_3480</name>
</gene>
<keyword id="KW-0028">Amino-acid biosynthesis</keyword>
<keyword id="KW-0057">Aromatic amino acid biosynthesis</keyword>
<keyword id="KW-0521">NADP</keyword>
<keyword id="KW-0560">Oxidoreductase</keyword>
<comment type="function">
    <text evidence="1">Involved in the biosynthesis of the chorismate, which leads to the biosynthesis of aromatic amino acids. Catalyzes the reversible NADPH linked reduction of 3-dehydroshikimate (DHSA) to yield shikimate (SA).</text>
</comment>
<comment type="catalytic activity">
    <reaction evidence="1">
        <text>shikimate + NADP(+) = 3-dehydroshikimate + NADPH + H(+)</text>
        <dbReference type="Rhea" id="RHEA:17737"/>
        <dbReference type="ChEBI" id="CHEBI:15378"/>
        <dbReference type="ChEBI" id="CHEBI:16630"/>
        <dbReference type="ChEBI" id="CHEBI:36208"/>
        <dbReference type="ChEBI" id="CHEBI:57783"/>
        <dbReference type="ChEBI" id="CHEBI:58349"/>
        <dbReference type="EC" id="1.1.1.25"/>
    </reaction>
</comment>
<comment type="pathway">
    <text evidence="1">Metabolic intermediate biosynthesis; chorismate biosynthesis; chorismate from D-erythrose 4-phosphate and phosphoenolpyruvate: step 4/7.</text>
</comment>
<comment type="subunit">
    <text evidence="1">Homodimer.</text>
</comment>
<comment type="similarity">
    <text evidence="1">Belongs to the shikimate dehydrogenase family.</text>
</comment>
<name>AROE_CHESB</name>